<evidence type="ECO:0000250" key="1"/>
<evidence type="ECO:0000250" key="2">
    <source>
        <dbReference type="UniProtKB" id="Q05905"/>
    </source>
</evidence>
<evidence type="ECO:0000305" key="3"/>
<gene>
    <name type="primary">HRI1</name>
    <name type="ORF">VL3_3357</name>
</gene>
<feature type="chain" id="PRO_0000410822" description="Protein HRI1">
    <location>
        <begin position="1"/>
        <end position="244"/>
    </location>
</feature>
<feature type="modified residue" description="Phosphoserine" evidence="2">
    <location>
        <position position="143"/>
    </location>
</feature>
<accession>E7QIA1</accession>
<proteinExistence type="inferred from homology"/>
<keyword id="KW-0963">Cytoplasm</keyword>
<keyword id="KW-0539">Nucleus</keyword>
<keyword id="KW-0597">Phosphoprotein</keyword>
<organism>
    <name type="scientific">Saccharomyces cerevisiae (strain Zymaflore VL3)</name>
    <name type="common">Baker's yeast</name>
    <dbReference type="NCBI Taxonomy" id="764100"/>
    <lineage>
        <taxon>Eukaryota</taxon>
        <taxon>Fungi</taxon>
        <taxon>Dikarya</taxon>
        <taxon>Ascomycota</taxon>
        <taxon>Saccharomycotina</taxon>
        <taxon>Saccharomycetes</taxon>
        <taxon>Saccharomycetales</taxon>
        <taxon>Saccharomycetaceae</taxon>
        <taxon>Saccharomyces</taxon>
    </lineage>
</organism>
<sequence>MPALLKRLLFQVGPHPNERTFTLSSVSTDGHYISLRPFVKPSGDELSFPFEWAFAGTNETVKVNDQGNGVVTQDFNFWLDTNVYLNVPNTHRGEVNTTWKNWDSGCVEETGAVYPFGADKESVSFRELWQPVDPSREDLVIVSPNNEKFSSNARSIVLKVTDEAYDGLVIVIGRWIQGFLSQKNNNTIEGLNFIRLLXKDSGKSEFLLSYGKEVNKIPQSYENLKKGSTVTSNGLNWEVIEYHA</sequence>
<dbReference type="EMBL" id="AEJS01000050">
    <property type="protein sequence ID" value="EGA85696.1"/>
    <property type="molecule type" value="Genomic_DNA"/>
</dbReference>
<dbReference type="HOGENOM" id="CLU_097607_0_0_1"/>
<dbReference type="OrthoDB" id="4045395at2759"/>
<dbReference type="GO" id="GO:0005737">
    <property type="term" value="C:cytoplasm"/>
    <property type="evidence" value="ECO:0007669"/>
    <property type="project" value="UniProtKB-SubCell"/>
</dbReference>
<dbReference type="GO" id="GO:0005634">
    <property type="term" value="C:nucleus"/>
    <property type="evidence" value="ECO:0007669"/>
    <property type="project" value="UniProtKB-SubCell"/>
</dbReference>
<dbReference type="CDD" id="cd11693">
    <property type="entry name" value="HRI1_C_like"/>
    <property type="match status" value="1"/>
</dbReference>
<dbReference type="CDD" id="cd11692">
    <property type="entry name" value="HRI1_N_like"/>
    <property type="match status" value="1"/>
</dbReference>
<dbReference type="Gene3D" id="2.40.128.310">
    <property type="entry name" value="Protein HRI1, C-terminal domain"/>
    <property type="match status" value="1"/>
</dbReference>
<dbReference type="Gene3D" id="2.40.128.320">
    <property type="entry name" value="Protein HRI1, N-terminal domain"/>
    <property type="match status" value="1"/>
</dbReference>
<dbReference type="InterPro" id="IPR031818">
    <property type="entry name" value="Hri1"/>
</dbReference>
<dbReference type="InterPro" id="IPR038744">
    <property type="entry name" value="Hri1_N"/>
</dbReference>
<dbReference type="InterPro" id="IPR043047">
    <property type="entry name" value="Hri1_N_sf"/>
</dbReference>
<dbReference type="Pfam" id="PF16815">
    <property type="entry name" value="HRI1"/>
    <property type="match status" value="1"/>
</dbReference>
<name>HRI1_YEASZ</name>
<comment type="subunit">
    <text evidence="1">Interacts with HRR25. May interact with SEC72.</text>
</comment>
<comment type="subcellular location">
    <subcellularLocation>
        <location evidence="1">Cytoplasm</location>
    </subcellularLocation>
    <subcellularLocation>
        <location evidence="1">Nucleus</location>
    </subcellularLocation>
</comment>
<comment type="similarity">
    <text evidence="3">Belongs to the HRI1 family.</text>
</comment>
<protein>
    <recommendedName>
        <fullName>Protein HRI1</fullName>
    </recommendedName>
    <alternativeName>
        <fullName>HRR25-interacting protein 1</fullName>
    </alternativeName>
</protein>
<reference key="1">
    <citation type="journal article" date="2011" name="PLoS Genet.">
        <title>Whole-genome comparison reveals novel genetic elements that characterize the genome of industrial strains of Saccharomyces cerevisiae.</title>
        <authorList>
            <person name="Borneman A.R."/>
            <person name="Desany B.A."/>
            <person name="Riches D."/>
            <person name="Affourtit J.P."/>
            <person name="Forgan A.H."/>
            <person name="Pretorius I.S."/>
            <person name="Egholm M."/>
            <person name="Chambers P.J."/>
        </authorList>
    </citation>
    <scope>NUCLEOTIDE SEQUENCE [LARGE SCALE GENOMIC DNA]</scope>
    <source>
        <strain>Zymaflore VL3</strain>
    </source>
</reference>